<proteinExistence type="inferred from homology"/>
<reference key="1">
    <citation type="journal article" date="2004" name="Nucleic Acids Res.">
        <title>Whole genome comparisons of serotype 4b and 1/2a strains of the food-borne pathogen Listeria monocytogenes reveal new insights into the core genome components of this species.</title>
        <authorList>
            <person name="Nelson K.E."/>
            <person name="Fouts D.E."/>
            <person name="Mongodin E.F."/>
            <person name="Ravel J."/>
            <person name="DeBoy R.T."/>
            <person name="Kolonay J.F."/>
            <person name="Rasko D.A."/>
            <person name="Angiuoli S.V."/>
            <person name="Gill S.R."/>
            <person name="Paulsen I.T."/>
            <person name="Peterson J.D."/>
            <person name="White O."/>
            <person name="Nelson W.C."/>
            <person name="Nierman W.C."/>
            <person name="Beanan M.J."/>
            <person name="Brinkac L.M."/>
            <person name="Daugherty S.C."/>
            <person name="Dodson R.J."/>
            <person name="Durkin A.S."/>
            <person name="Madupu R."/>
            <person name="Haft D.H."/>
            <person name="Selengut J."/>
            <person name="Van Aken S.E."/>
            <person name="Khouri H.M."/>
            <person name="Fedorova N."/>
            <person name="Forberger H.A."/>
            <person name="Tran B."/>
            <person name="Kathariou S."/>
            <person name="Wonderling L.D."/>
            <person name="Uhlich G.A."/>
            <person name="Bayles D.O."/>
            <person name="Luchansky J.B."/>
            <person name="Fraser C.M."/>
        </authorList>
    </citation>
    <scope>NUCLEOTIDE SEQUENCE [LARGE SCALE GENOMIC DNA]</scope>
    <source>
        <strain>F2365</strain>
    </source>
</reference>
<protein>
    <recommendedName>
        <fullName evidence="1">Endoribonuclease YbeY</fullName>
        <ecNumber evidence="1">3.1.-.-</ecNumber>
    </recommendedName>
</protein>
<dbReference type="EC" id="3.1.-.-" evidence="1"/>
<dbReference type="EMBL" id="AE017262">
    <property type="protein sequence ID" value="AAT04259.1"/>
    <property type="molecule type" value="Genomic_DNA"/>
</dbReference>
<dbReference type="RefSeq" id="WP_003726015.1">
    <property type="nucleotide sequence ID" value="NC_002973.6"/>
</dbReference>
<dbReference type="SMR" id="Q71ZK5"/>
<dbReference type="KEGG" id="lmf:LMOf2365_1484"/>
<dbReference type="HOGENOM" id="CLU_106710_3_0_9"/>
<dbReference type="GO" id="GO:0005737">
    <property type="term" value="C:cytoplasm"/>
    <property type="evidence" value="ECO:0007669"/>
    <property type="project" value="UniProtKB-SubCell"/>
</dbReference>
<dbReference type="GO" id="GO:0004222">
    <property type="term" value="F:metalloendopeptidase activity"/>
    <property type="evidence" value="ECO:0007669"/>
    <property type="project" value="InterPro"/>
</dbReference>
<dbReference type="GO" id="GO:0004521">
    <property type="term" value="F:RNA endonuclease activity"/>
    <property type="evidence" value="ECO:0007669"/>
    <property type="project" value="UniProtKB-UniRule"/>
</dbReference>
<dbReference type="GO" id="GO:0008270">
    <property type="term" value="F:zinc ion binding"/>
    <property type="evidence" value="ECO:0007669"/>
    <property type="project" value="UniProtKB-UniRule"/>
</dbReference>
<dbReference type="GO" id="GO:0006364">
    <property type="term" value="P:rRNA processing"/>
    <property type="evidence" value="ECO:0007669"/>
    <property type="project" value="UniProtKB-UniRule"/>
</dbReference>
<dbReference type="Gene3D" id="3.40.390.30">
    <property type="entry name" value="Metalloproteases ('zincins'), catalytic domain"/>
    <property type="match status" value="1"/>
</dbReference>
<dbReference type="HAMAP" id="MF_00009">
    <property type="entry name" value="Endoribonucl_YbeY"/>
    <property type="match status" value="1"/>
</dbReference>
<dbReference type="InterPro" id="IPR023091">
    <property type="entry name" value="MetalPrtase_cat_dom_sf_prd"/>
</dbReference>
<dbReference type="InterPro" id="IPR002036">
    <property type="entry name" value="YbeY"/>
</dbReference>
<dbReference type="InterPro" id="IPR020549">
    <property type="entry name" value="YbeY_CS"/>
</dbReference>
<dbReference type="NCBIfam" id="TIGR00043">
    <property type="entry name" value="rRNA maturation RNase YbeY"/>
    <property type="match status" value="1"/>
</dbReference>
<dbReference type="PANTHER" id="PTHR46986">
    <property type="entry name" value="ENDORIBONUCLEASE YBEY, CHLOROPLASTIC"/>
    <property type="match status" value="1"/>
</dbReference>
<dbReference type="PANTHER" id="PTHR46986:SF1">
    <property type="entry name" value="ENDORIBONUCLEASE YBEY, CHLOROPLASTIC"/>
    <property type="match status" value="1"/>
</dbReference>
<dbReference type="Pfam" id="PF02130">
    <property type="entry name" value="YbeY"/>
    <property type="match status" value="1"/>
</dbReference>
<dbReference type="SUPFAM" id="SSF55486">
    <property type="entry name" value="Metalloproteases ('zincins'), catalytic domain"/>
    <property type="match status" value="1"/>
</dbReference>
<dbReference type="PROSITE" id="PS01306">
    <property type="entry name" value="UPF0054"/>
    <property type="match status" value="1"/>
</dbReference>
<accession>Q71ZK5</accession>
<keyword id="KW-0963">Cytoplasm</keyword>
<keyword id="KW-0255">Endonuclease</keyword>
<keyword id="KW-0378">Hydrolase</keyword>
<keyword id="KW-0479">Metal-binding</keyword>
<keyword id="KW-0540">Nuclease</keyword>
<keyword id="KW-0690">Ribosome biogenesis</keyword>
<keyword id="KW-0698">rRNA processing</keyword>
<keyword id="KW-0862">Zinc</keyword>
<feature type="chain" id="PRO_0000102480" description="Endoribonuclease YbeY">
    <location>
        <begin position="1"/>
        <end position="161"/>
    </location>
</feature>
<feature type="binding site" evidence="1">
    <location>
        <position position="127"/>
    </location>
    <ligand>
        <name>Zn(2+)</name>
        <dbReference type="ChEBI" id="CHEBI:29105"/>
        <note>catalytic</note>
    </ligand>
</feature>
<feature type="binding site" evidence="1">
    <location>
        <position position="131"/>
    </location>
    <ligand>
        <name>Zn(2+)</name>
        <dbReference type="ChEBI" id="CHEBI:29105"/>
        <note>catalytic</note>
    </ligand>
</feature>
<feature type="binding site" evidence="1">
    <location>
        <position position="137"/>
    </location>
    <ligand>
        <name>Zn(2+)</name>
        <dbReference type="ChEBI" id="CHEBI:29105"/>
        <note>catalytic</note>
    </ligand>
</feature>
<comment type="function">
    <text evidence="1">Single strand-specific metallo-endoribonuclease involved in late-stage 70S ribosome quality control and in maturation of the 3' terminus of the 16S rRNA.</text>
</comment>
<comment type="cofactor">
    <cofactor evidence="1">
        <name>Zn(2+)</name>
        <dbReference type="ChEBI" id="CHEBI:29105"/>
    </cofactor>
    <text evidence="1">Binds 1 zinc ion.</text>
</comment>
<comment type="subcellular location">
    <subcellularLocation>
        <location evidence="1">Cytoplasm</location>
    </subcellularLocation>
</comment>
<comment type="similarity">
    <text evidence="1">Belongs to the endoribonuclease YbeY family.</text>
</comment>
<evidence type="ECO:0000255" key="1">
    <source>
        <dbReference type="HAMAP-Rule" id="MF_00009"/>
    </source>
</evidence>
<gene>
    <name evidence="1" type="primary">ybeY</name>
    <name type="ordered locus">LMOf2365_1484</name>
</gene>
<sequence length="161" mass="18500">MTVLEIDLLDETKNLLDEDKQLVENILQFAAEYLKIEQGTELSLTFTTNEGIREINREYRDKDQATDVISFALEEMGDGETEIDWGEFDLETPRMLGDIIISTEKAEEQAKDYGHTKARELGFLAVHGLLHLLGYDHMEPDEEKIMFGLQKEVLDAYGLER</sequence>
<name>YBEY_LISMF</name>
<organism>
    <name type="scientific">Listeria monocytogenes serotype 4b (strain F2365)</name>
    <dbReference type="NCBI Taxonomy" id="265669"/>
    <lineage>
        <taxon>Bacteria</taxon>
        <taxon>Bacillati</taxon>
        <taxon>Bacillota</taxon>
        <taxon>Bacilli</taxon>
        <taxon>Bacillales</taxon>
        <taxon>Listeriaceae</taxon>
        <taxon>Listeria</taxon>
    </lineage>
</organism>